<protein>
    <recommendedName>
        <fullName evidence="1">Small ribosomal subunit protein uS9</fullName>
    </recommendedName>
    <alternativeName>
        <fullName evidence="2">30S ribosomal protein S9</fullName>
    </alternativeName>
</protein>
<evidence type="ECO:0000255" key="1">
    <source>
        <dbReference type="HAMAP-Rule" id="MF_00532"/>
    </source>
</evidence>
<evidence type="ECO:0000305" key="2"/>
<feature type="chain" id="PRO_1000051323" description="Small ribosomal subunit protein uS9">
    <location>
        <begin position="1"/>
        <end position="130"/>
    </location>
</feature>
<accession>A4Y3E2</accession>
<keyword id="KW-0687">Ribonucleoprotein</keyword>
<keyword id="KW-0689">Ribosomal protein</keyword>
<dbReference type="EMBL" id="CP000681">
    <property type="protein sequence ID" value="ABP74475.1"/>
    <property type="molecule type" value="Genomic_DNA"/>
</dbReference>
<dbReference type="SMR" id="A4Y3E2"/>
<dbReference type="STRING" id="319224.Sputcn32_0745"/>
<dbReference type="KEGG" id="spc:Sputcn32_0745"/>
<dbReference type="eggNOG" id="COG0103">
    <property type="taxonomic scope" value="Bacteria"/>
</dbReference>
<dbReference type="HOGENOM" id="CLU_046483_2_1_6"/>
<dbReference type="GO" id="GO:0022627">
    <property type="term" value="C:cytosolic small ribosomal subunit"/>
    <property type="evidence" value="ECO:0007669"/>
    <property type="project" value="TreeGrafter"/>
</dbReference>
<dbReference type="GO" id="GO:0003723">
    <property type="term" value="F:RNA binding"/>
    <property type="evidence" value="ECO:0007669"/>
    <property type="project" value="TreeGrafter"/>
</dbReference>
<dbReference type="GO" id="GO:0003735">
    <property type="term" value="F:structural constituent of ribosome"/>
    <property type="evidence" value="ECO:0007669"/>
    <property type="project" value="InterPro"/>
</dbReference>
<dbReference type="GO" id="GO:0006412">
    <property type="term" value="P:translation"/>
    <property type="evidence" value="ECO:0007669"/>
    <property type="project" value="UniProtKB-UniRule"/>
</dbReference>
<dbReference type="FunFam" id="3.30.230.10:FF:000001">
    <property type="entry name" value="30S ribosomal protein S9"/>
    <property type="match status" value="1"/>
</dbReference>
<dbReference type="Gene3D" id="3.30.230.10">
    <property type="match status" value="1"/>
</dbReference>
<dbReference type="HAMAP" id="MF_00532_B">
    <property type="entry name" value="Ribosomal_uS9_B"/>
    <property type="match status" value="1"/>
</dbReference>
<dbReference type="InterPro" id="IPR020568">
    <property type="entry name" value="Ribosomal_Su5_D2-typ_SF"/>
</dbReference>
<dbReference type="InterPro" id="IPR000754">
    <property type="entry name" value="Ribosomal_uS9"/>
</dbReference>
<dbReference type="InterPro" id="IPR023035">
    <property type="entry name" value="Ribosomal_uS9_bac/plastid"/>
</dbReference>
<dbReference type="InterPro" id="IPR020574">
    <property type="entry name" value="Ribosomal_uS9_CS"/>
</dbReference>
<dbReference type="InterPro" id="IPR014721">
    <property type="entry name" value="Ribsml_uS5_D2-typ_fold_subgr"/>
</dbReference>
<dbReference type="NCBIfam" id="NF001099">
    <property type="entry name" value="PRK00132.1"/>
    <property type="match status" value="1"/>
</dbReference>
<dbReference type="PANTHER" id="PTHR21569">
    <property type="entry name" value="RIBOSOMAL PROTEIN S9"/>
    <property type="match status" value="1"/>
</dbReference>
<dbReference type="PANTHER" id="PTHR21569:SF1">
    <property type="entry name" value="SMALL RIBOSOMAL SUBUNIT PROTEIN US9M"/>
    <property type="match status" value="1"/>
</dbReference>
<dbReference type="Pfam" id="PF00380">
    <property type="entry name" value="Ribosomal_S9"/>
    <property type="match status" value="1"/>
</dbReference>
<dbReference type="SUPFAM" id="SSF54211">
    <property type="entry name" value="Ribosomal protein S5 domain 2-like"/>
    <property type="match status" value="1"/>
</dbReference>
<dbReference type="PROSITE" id="PS00360">
    <property type="entry name" value="RIBOSOMAL_S9"/>
    <property type="match status" value="1"/>
</dbReference>
<reference key="1">
    <citation type="submission" date="2007-04" db="EMBL/GenBank/DDBJ databases">
        <title>Complete sequence of Shewanella putrefaciens CN-32.</title>
        <authorList>
            <consortium name="US DOE Joint Genome Institute"/>
            <person name="Copeland A."/>
            <person name="Lucas S."/>
            <person name="Lapidus A."/>
            <person name="Barry K."/>
            <person name="Detter J.C."/>
            <person name="Glavina del Rio T."/>
            <person name="Hammon N."/>
            <person name="Israni S."/>
            <person name="Dalin E."/>
            <person name="Tice H."/>
            <person name="Pitluck S."/>
            <person name="Chain P."/>
            <person name="Malfatti S."/>
            <person name="Shin M."/>
            <person name="Vergez L."/>
            <person name="Schmutz J."/>
            <person name="Larimer F."/>
            <person name="Land M."/>
            <person name="Hauser L."/>
            <person name="Kyrpides N."/>
            <person name="Mikhailova N."/>
            <person name="Romine M.F."/>
            <person name="Fredrickson J."/>
            <person name="Tiedje J."/>
            <person name="Richardson P."/>
        </authorList>
    </citation>
    <scope>NUCLEOTIDE SEQUENCE [LARGE SCALE GENOMIC DNA]</scope>
    <source>
        <strain>CN-32 / ATCC BAA-453</strain>
    </source>
</reference>
<comment type="similarity">
    <text evidence="1">Belongs to the universal ribosomal protein uS9 family.</text>
</comment>
<proteinExistence type="inferred from homology"/>
<name>RS9_SHEPC</name>
<organism>
    <name type="scientific">Shewanella putrefaciens (strain CN-32 / ATCC BAA-453)</name>
    <dbReference type="NCBI Taxonomy" id="319224"/>
    <lineage>
        <taxon>Bacteria</taxon>
        <taxon>Pseudomonadati</taxon>
        <taxon>Pseudomonadota</taxon>
        <taxon>Gammaproteobacteria</taxon>
        <taxon>Alteromonadales</taxon>
        <taxon>Shewanellaceae</taxon>
        <taxon>Shewanella</taxon>
    </lineage>
</organism>
<sequence>MAATQYYGTGRRKTSTARVFAKAGSGNIVVNQRPLDQYFGRETARMVVRQPLELVEMTDKLDIYVTVKGGGITGQAGAIRHGITRALMQLDEALRPSLRSAGFVTRDARKVERKKVGLRKARRKPQFSKR</sequence>
<gene>
    <name evidence="1" type="primary">rpsI</name>
    <name type="ordered locus">Sputcn32_0745</name>
</gene>